<organism>
    <name type="scientific">Arabidopsis thaliana</name>
    <name type="common">Mouse-ear cress</name>
    <dbReference type="NCBI Taxonomy" id="3702"/>
    <lineage>
        <taxon>Eukaryota</taxon>
        <taxon>Viridiplantae</taxon>
        <taxon>Streptophyta</taxon>
        <taxon>Embryophyta</taxon>
        <taxon>Tracheophyta</taxon>
        <taxon>Spermatophyta</taxon>
        <taxon>Magnoliopsida</taxon>
        <taxon>eudicotyledons</taxon>
        <taxon>Gunneridae</taxon>
        <taxon>Pentapetalae</taxon>
        <taxon>rosids</taxon>
        <taxon>malvids</taxon>
        <taxon>Brassicales</taxon>
        <taxon>Brassicaceae</taxon>
        <taxon>Camelineae</taxon>
        <taxon>Arabidopsis</taxon>
    </lineage>
</organism>
<evidence type="ECO:0000250" key="1"/>
<evidence type="ECO:0000255" key="2">
    <source>
        <dbReference type="PROSITE-ProRule" id="PRU00434"/>
    </source>
</evidence>
<evidence type="ECO:0000255" key="3">
    <source>
        <dbReference type="PROSITE-ProRule" id="PRU00441"/>
    </source>
</evidence>
<evidence type="ECO:0000256" key="4">
    <source>
        <dbReference type="SAM" id="MobiDB-lite"/>
    </source>
</evidence>
<evidence type="ECO:0000269" key="5">
    <source>
    </source>
</evidence>
<evidence type="ECO:0000269" key="6">
    <source>
    </source>
</evidence>
<evidence type="ECO:0000269" key="7">
    <source>
    </source>
</evidence>
<evidence type="ECO:0000269" key="8">
    <source>
    </source>
</evidence>
<evidence type="ECO:0000269" key="9">
    <source>
    </source>
</evidence>
<evidence type="ECO:0000269" key="10">
    <source>
    </source>
</evidence>
<evidence type="ECO:0000305" key="11"/>
<dbReference type="EC" id="7.6.2.2"/>
<dbReference type="EMBL" id="AF014960">
    <property type="protein sequence ID" value="AAC49988.1"/>
    <property type="molecule type" value="mRNA"/>
</dbReference>
<dbReference type="EMBL" id="AF020288">
    <property type="protein sequence ID" value="AAC04245.1"/>
    <property type="molecule type" value="mRNA"/>
</dbReference>
<dbReference type="EMBL" id="AF020289">
    <property type="protein sequence ID" value="AAC04246.1"/>
    <property type="status" value="ALT_FRAME"/>
    <property type="molecule type" value="Genomic_DNA"/>
</dbReference>
<dbReference type="EMBL" id="AC003096">
    <property type="protein sequence ID" value="AAC16268.1"/>
    <property type="molecule type" value="Genomic_DNA"/>
</dbReference>
<dbReference type="EMBL" id="CP002685">
    <property type="protein sequence ID" value="AEC09005.1"/>
    <property type="molecule type" value="Genomic_DNA"/>
</dbReference>
<dbReference type="EMBL" id="CP002685">
    <property type="protein sequence ID" value="AEC09006.1"/>
    <property type="molecule type" value="Genomic_DNA"/>
</dbReference>
<dbReference type="EMBL" id="Z26467">
    <property type="protein sequence ID" value="CAA81250.1"/>
    <property type="status" value="ALT_FRAME"/>
    <property type="molecule type" value="mRNA"/>
</dbReference>
<dbReference type="EMBL" id="U96400">
    <property type="protein sequence ID" value="AAC49798.1"/>
    <property type="status" value="ALT_FRAME"/>
    <property type="molecule type" value="mRNA"/>
</dbReference>
<dbReference type="PIR" id="T01369">
    <property type="entry name" value="T01369"/>
</dbReference>
<dbReference type="RefSeq" id="NP_001189675.1">
    <property type="nucleotide sequence ID" value="NM_001202746.1"/>
</dbReference>
<dbReference type="RefSeq" id="NP_181013.1">
    <property type="nucleotide sequence ID" value="NM_129020.3"/>
</dbReference>
<dbReference type="SMR" id="Q42093"/>
<dbReference type="BioGRID" id="3377">
    <property type="interactions" value="1"/>
</dbReference>
<dbReference type="FunCoup" id="Q42093">
    <property type="interactions" value="2110"/>
</dbReference>
<dbReference type="IntAct" id="Q42093">
    <property type="interactions" value="1"/>
</dbReference>
<dbReference type="STRING" id="3702.Q42093"/>
<dbReference type="TCDB" id="3.A.1.208.5">
    <property type="family name" value="the atp-binding cassette (abc) superfamily"/>
</dbReference>
<dbReference type="iPTMnet" id="Q42093"/>
<dbReference type="PaxDb" id="3702-AT2G34660.1"/>
<dbReference type="ProteomicsDB" id="243291"/>
<dbReference type="EnsemblPlants" id="AT2G34660.1">
    <property type="protein sequence ID" value="AT2G34660.1"/>
    <property type="gene ID" value="AT2G34660"/>
</dbReference>
<dbReference type="EnsemblPlants" id="AT2G34660.2">
    <property type="protein sequence ID" value="AT2G34660.2"/>
    <property type="gene ID" value="AT2G34660"/>
</dbReference>
<dbReference type="GeneID" id="818031"/>
<dbReference type="Gramene" id="AT2G34660.1">
    <property type="protein sequence ID" value="AT2G34660.1"/>
    <property type="gene ID" value="AT2G34660"/>
</dbReference>
<dbReference type="Gramene" id="AT2G34660.2">
    <property type="protein sequence ID" value="AT2G34660.2"/>
    <property type="gene ID" value="AT2G34660"/>
</dbReference>
<dbReference type="KEGG" id="ath:AT2G34660"/>
<dbReference type="Araport" id="AT2G34660"/>
<dbReference type="TAIR" id="AT2G34660">
    <property type="gene designation" value="ABCC2"/>
</dbReference>
<dbReference type="eggNOG" id="KOG0054">
    <property type="taxonomic scope" value="Eukaryota"/>
</dbReference>
<dbReference type="HOGENOM" id="CLU_000604_27_2_1"/>
<dbReference type="InParanoid" id="Q42093"/>
<dbReference type="PhylomeDB" id="Q42093"/>
<dbReference type="BioCyc" id="ARA:AT2G34660-MONOMER"/>
<dbReference type="PRO" id="PR:Q42093"/>
<dbReference type="Proteomes" id="UP000006548">
    <property type="component" value="Chromosome 2"/>
</dbReference>
<dbReference type="ExpressionAtlas" id="Q42093">
    <property type="expression patterns" value="baseline and differential"/>
</dbReference>
<dbReference type="GO" id="GO:0005783">
    <property type="term" value="C:endoplasmic reticulum"/>
    <property type="evidence" value="ECO:0007005"/>
    <property type="project" value="TAIR"/>
</dbReference>
<dbReference type="GO" id="GO:0000325">
    <property type="term" value="C:plant-type vacuole"/>
    <property type="evidence" value="ECO:0007005"/>
    <property type="project" value="TAIR"/>
</dbReference>
<dbReference type="GO" id="GO:0005774">
    <property type="term" value="C:vacuolar membrane"/>
    <property type="evidence" value="ECO:0007005"/>
    <property type="project" value="TAIR"/>
</dbReference>
<dbReference type="GO" id="GO:0005773">
    <property type="term" value="C:vacuole"/>
    <property type="evidence" value="ECO:0007005"/>
    <property type="project" value="TAIR"/>
</dbReference>
<dbReference type="GO" id="GO:1902417">
    <property type="term" value="F:(+)-abscisic acid D-glucopyranosyl ester transmembrane transporter activity"/>
    <property type="evidence" value="ECO:0000314"/>
    <property type="project" value="TAIR"/>
</dbReference>
<dbReference type="GO" id="GO:0008559">
    <property type="term" value="F:ABC-type xenobiotic transporter activity"/>
    <property type="evidence" value="ECO:0007669"/>
    <property type="project" value="UniProtKB-EC"/>
</dbReference>
<dbReference type="GO" id="GO:0005524">
    <property type="term" value="F:ATP binding"/>
    <property type="evidence" value="ECO:0007669"/>
    <property type="project" value="UniProtKB-KW"/>
</dbReference>
<dbReference type="GO" id="GO:0016887">
    <property type="term" value="F:ATP hydrolysis activity"/>
    <property type="evidence" value="ECO:0007669"/>
    <property type="project" value="InterPro"/>
</dbReference>
<dbReference type="GO" id="GO:0042626">
    <property type="term" value="F:ATPase-coupled transmembrane transporter activity"/>
    <property type="evidence" value="ECO:0000314"/>
    <property type="project" value="TAIR"/>
</dbReference>
<dbReference type="GO" id="GO:0005516">
    <property type="term" value="F:calmodulin binding"/>
    <property type="evidence" value="ECO:0007669"/>
    <property type="project" value="UniProtKB-KW"/>
</dbReference>
<dbReference type="GO" id="GO:1902418">
    <property type="term" value="P:(+)-abscisic acid D-glucopyranosyl ester transmembrane transport"/>
    <property type="evidence" value="ECO:0000314"/>
    <property type="project" value="TAIR"/>
</dbReference>
<dbReference type="CDD" id="cd18579">
    <property type="entry name" value="ABC_6TM_ABCC_D1"/>
    <property type="match status" value="1"/>
</dbReference>
<dbReference type="CDD" id="cd18580">
    <property type="entry name" value="ABC_6TM_ABCC_D2"/>
    <property type="match status" value="1"/>
</dbReference>
<dbReference type="CDD" id="cd03250">
    <property type="entry name" value="ABCC_MRP_domain1"/>
    <property type="match status" value="1"/>
</dbReference>
<dbReference type="CDD" id="cd03244">
    <property type="entry name" value="ABCC_MRP_domain2"/>
    <property type="match status" value="1"/>
</dbReference>
<dbReference type="FunFam" id="1.20.1560.10:FF:000013">
    <property type="entry name" value="ABC transporter C family member 2"/>
    <property type="match status" value="1"/>
</dbReference>
<dbReference type="FunFam" id="1.20.1560.10:FF:000024">
    <property type="entry name" value="ABC transporter C family member 2"/>
    <property type="match status" value="1"/>
</dbReference>
<dbReference type="FunFam" id="3.40.50.300:FF:000450">
    <property type="entry name" value="ABC transporter C family member 2"/>
    <property type="match status" value="1"/>
</dbReference>
<dbReference type="FunFam" id="3.40.50.300:FF:000163">
    <property type="entry name" value="Multidrug resistance-associated protein member 4"/>
    <property type="match status" value="1"/>
</dbReference>
<dbReference type="Gene3D" id="1.20.1560.10">
    <property type="entry name" value="ABC transporter type 1, transmembrane domain"/>
    <property type="match status" value="2"/>
</dbReference>
<dbReference type="Gene3D" id="3.40.50.300">
    <property type="entry name" value="P-loop containing nucleotide triphosphate hydrolases"/>
    <property type="match status" value="2"/>
</dbReference>
<dbReference type="InterPro" id="IPR003593">
    <property type="entry name" value="AAA+_ATPase"/>
</dbReference>
<dbReference type="InterPro" id="IPR011527">
    <property type="entry name" value="ABC1_TM_dom"/>
</dbReference>
<dbReference type="InterPro" id="IPR036640">
    <property type="entry name" value="ABC1_TM_sf"/>
</dbReference>
<dbReference type="InterPro" id="IPR003439">
    <property type="entry name" value="ABC_transporter-like_ATP-bd"/>
</dbReference>
<dbReference type="InterPro" id="IPR017871">
    <property type="entry name" value="ABC_transporter-like_CS"/>
</dbReference>
<dbReference type="InterPro" id="IPR050173">
    <property type="entry name" value="ABC_transporter_C-like"/>
</dbReference>
<dbReference type="InterPro" id="IPR044746">
    <property type="entry name" value="ABCC_6TM_D1"/>
</dbReference>
<dbReference type="InterPro" id="IPR044726">
    <property type="entry name" value="ABCC_6TM_D2"/>
</dbReference>
<dbReference type="InterPro" id="IPR027417">
    <property type="entry name" value="P-loop_NTPase"/>
</dbReference>
<dbReference type="PANTHER" id="PTHR24223">
    <property type="entry name" value="ATP-BINDING CASSETTE SUB-FAMILY C"/>
    <property type="match status" value="1"/>
</dbReference>
<dbReference type="PANTHER" id="PTHR24223:SF456">
    <property type="entry name" value="MULTIDRUG RESISTANCE-ASSOCIATED PROTEIN LETHAL(2)03659"/>
    <property type="match status" value="1"/>
</dbReference>
<dbReference type="Pfam" id="PF00664">
    <property type="entry name" value="ABC_membrane"/>
    <property type="match status" value="2"/>
</dbReference>
<dbReference type="Pfam" id="PF00005">
    <property type="entry name" value="ABC_tran"/>
    <property type="match status" value="2"/>
</dbReference>
<dbReference type="SMART" id="SM00382">
    <property type="entry name" value="AAA"/>
    <property type="match status" value="2"/>
</dbReference>
<dbReference type="SUPFAM" id="SSF90123">
    <property type="entry name" value="ABC transporter transmembrane region"/>
    <property type="match status" value="2"/>
</dbReference>
<dbReference type="SUPFAM" id="SSF52540">
    <property type="entry name" value="P-loop containing nucleoside triphosphate hydrolases"/>
    <property type="match status" value="2"/>
</dbReference>
<dbReference type="PROSITE" id="PS50929">
    <property type="entry name" value="ABC_TM1F"/>
    <property type="match status" value="2"/>
</dbReference>
<dbReference type="PROSITE" id="PS00211">
    <property type="entry name" value="ABC_TRANSPORTER_1"/>
    <property type="match status" value="2"/>
</dbReference>
<dbReference type="PROSITE" id="PS50893">
    <property type="entry name" value="ABC_TRANSPORTER_2"/>
    <property type="match status" value="2"/>
</dbReference>
<name>AB2C_ARATH</name>
<keyword id="KW-0067">ATP-binding</keyword>
<keyword id="KW-0112">Calmodulin-binding</keyword>
<keyword id="KW-0472">Membrane</keyword>
<keyword id="KW-0547">Nucleotide-binding</keyword>
<keyword id="KW-1185">Reference proteome</keyword>
<keyword id="KW-0677">Repeat</keyword>
<keyword id="KW-1278">Translocase</keyword>
<keyword id="KW-0812">Transmembrane</keyword>
<keyword id="KW-1133">Transmembrane helix</keyword>
<keyword id="KW-0813">Transport</keyword>
<keyword id="KW-0926">Vacuole</keyword>
<protein>
    <recommendedName>
        <fullName>ABC transporter C family member 2</fullName>
        <shortName>ABC transporter ABCC.2</shortName>
        <shortName>AtABCC2</shortName>
        <ecNumber>7.6.2.2</ecNumber>
    </recommendedName>
    <alternativeName>
        <fullName>ATP-energized glutathione S-conjugate pump 2</fullName>
    </alternativeName>
    <alternativeName>
        <fullName>Glutathione S-conjugate-transporting ATPase 2</fullName>
    </alternativeName>
    <alternativeName>
        <fullName>Multidrug resistance-associated protein 2</fullName>
    </alternativeName>
</protein>
<comment type="function">
    <text evidence="5 10">Pump for glutathione S-conjugates. Mediates the transport of S-conjugates such as GSH, S-(2,4-dinitrophenyl)-glutathione (DNP-GS), GSSG, cyanidin 3-glucoside-GS (C3G-GS) and metolachlor-GS (MOC-GS), glucuronides such as 17-beta-estradiol 17-(beta-D-glucuronide) (E(2)17betaG), and of the chlorophyll catabolite such as B.napus nonfluorescent chlorophyll catabolite (Bn-NCC-1).</text>
</comment>
<comment type="catalytic activity">
    <reaction>
        <text>ATP + H2O + xenobioticSide 1 = ADP + phosphate + xenobioticSide 2.</text>
        <dbReference type="EC" id="7.6.2.2"/>
    </reaction>
</comment>
<comment type="activity regulation">
    <text evidence="5">Reciprocal promotion of DNP-GS and E(2)17betaG uptake. E(2)17betaG uptake is also stimulated by GSH and S-methyl-glutathione (S-methyl-GS), and, to a lower extent, by GSSG and C3G-GS. Metolachlor-GS and decyl-GS slightly inhibit E(2)17betaG uptake.</text>
</comment>
<comment type="biophysicochemical properties">
    <kinetics>
        <KM evidence="5 10">750 uM for E(2)17betaG (at pH 8.0 and 25 degrees Celsius)</KM>
        <KM evidence="5 10">240 uM for E(2)17betaG (with 100 uM DNP-GS at pH 8.0 and 25 degrees Celsius)</KM>
        <KM evidence="5 10">4.7 uM for E(2)17betaG (with 500 uM GSH at pH 8.0 and 25 degrees Celsius)</KM>
        <KM evidence="5 10">66 uM for DNP-GS (at pH 8)</KM>
        <KM evidence="5 10">20 uM for DNP-GS (with 100 uM E(2)17betaG at pH 8 and 25 degrees Celsius)</KM>
        <KM evidence="5 10">73 uM for GSSG (at pH 8)</KM>
        <KM evidence="5 10">75 uM for MOC-GS (at pH 8)</KM>
        <KM evidence="5 10">15 uM for Bn-NCC-1 (at pH 8)</KM>
        <Vmax evidence="5 10">8.8 nmol/min/mg enzyme with E(2)17betaG as substrate (at pH 8.0 and 25 degrees Celsius)</Vmax>
        <Vmax evidence="5 10">11.5 nmol/min/mg enzyme with E(2)17betaG as substrate (with 100 uM DNP-GS at pH 8.0 and 25 degrees Celsius)</Vmax>
        <Vmax evidence="5 10">33.0 nmol/min/mg enzyme with E(2)17betaG as substrate (with 500 uM GSH at pH 8.0 and 25 degrees Celsius)</Vmax>
        <Vmax evidence="5 10">2.0 nmol/min/mg enzyme with DNP-GS as substrate (at pH 8 and 25 degrees Celsius)</Vmax>
        <Vmax evidence="5 10">1.8 nmol/min/mg enzyme with DNP-GS as substrate (with 100 uM E(2)17betaG at pH 8 and 25 degrees Celsius)</Vmax>
        <Vmax evidence="5 10">3.8 nmol/min/mg enzyme with GSSG as substrate (at pH 8)</Vmax>
        <Vmax evidence="5 10">13.6 nmol/min/mg enzyme with MOC-GS as substrate (at pH 8)</Vmax>
        <Vmax evidence="5 10">6.3 nmol/min/mg enzyme with Bn-NCC-1 as substrate (at pH 8)</Vmax>
    </kinetics>
</comment>
<comment type="subunit">
    <text evidence="7">Interacts with FKBP42/TWD1 and probably with calmodulin (CaM).</text>
</comment>
<comment type="subcellular location">
    <subcellularLocation>
        <location evidence="8">Vacuole membrane</location>
        <topology evidence="3">Multi-pass membrane protein</topology>
    </subcellularLocation>
    <text evidence="5">Tonoplast.</text>
</comment>
<comment type="tissue specificity">
    <text evidence="6 10">Ubiquitous, at low levels.</text>
</comment>
<comment type="induction">
    <text evidence="9">By 1-chloro-2,4-dinitrobenzene (CDNB).</text>
</comment>
<comment type="similarity">
    <text evidence="11">Belongs to the ABC transporter superfamily. ABCC family. Conjugate transporter (TC 3.A.1.208) subfamily.</text>
</comment>
<comment type="sequence caution" evidence="11">
    <conflict type="frameshift">
        <sequence resource="EMBL-CDS" id="AAC04246"/>
    </conflict>
</comment>
<comment type="sequence caution" evidence="11">
    <conflict type="frameshift">
        <sequence resource="EMBL-CDS" id="AAC49798"/>
    </conflict>
</comment>
<comment type="sequence caution" evidence="11">
    <conflict type="frameshift">
        <sequence resource="EMBL-CDS" id="CAA81250"/>
    </conflict>
</comment>
<proteinExistence type="evidence at protein level"/>
<accession>Q42093</accession>
<accession>O22449</accession>
<accession>O24526</accession>
<accession>O48907</accession>
<accession>O48908</accession>
<accession>O64590</accession>
<feature type="chain" id="PRO_0000226073" description="ABC transporter C family member 2">
    <location>
        <begin position="1"/>
        <end position="1623"/>
    </location>
</feature>
<feature type="transmembrane region" description="Helical" evidence="3">
    <location>
        <begin position="37"/>
        <end position="57"/>
    </location>
</feature>
<feature type="transmembrane region" description="Helical" evidence="3">
    <location>
        <begin position="76"/>
        <end position="96"/>
    </location>
</feature>
<feature type="transmembrane region" description="Helical" evidence="3">
    <location>
        <begin position="109"/>
        <end position="129"/>
    </location>
</feature>
<feature type="transmembrane region" description="Helical" evidence="3">
    <location>
        <begin position="145"/>
        <end position="165"/>
    </location>
</feature>
<feature type="transmembrane region" description="Helical" evidence="3">
    <location>
        <begin position="172"/>
        <end position="192"/>
    </location>
</feature>
<feature type="transmembrane region" description="Helical" evidence="3">
    <location>
        <begin position="336"/>
        <end position="356"/>
    </location>
</feature>
<feature type="transmembrane region" description="Helical" evidence="3">
    <location>
        <begin position="440"/>
        <end position="460"/>
    </location>
</feature>
<feature type="transmembrane region" description="Helical" evidence="3">
    <location>
        <begin position="527"/>
        <end position="547"/>
    </location>
</feature>
<feature type="transmembrane region" description="Helical" evidence="3">
    <location>
        <begin position="557"/>
        <end position="577"/>
    </location>
</feature>
<feature type="transmembrane region" description="Helical" evidence="3">
    <location>
        <begin position="914"/>
        <end position="934"/>
    </location>
</feature>
<feature type="transmembrane region" description="Helical" evidence="3">
    <location>
        <begin position="955"/>
        <end position="975"/>
    </location>
</feature>
<feature type="transmembrane region" description="Helical" evidence="3">
    <location>
        <begin position="1032"/>
        <end position="1054"/>
    </location>
</feature>
<feature type="transmembrane region" description="Helical" evidence="3">
    <location>
        <begin position="1058"/>
        <end position="1077"/>
    </location>
</feature>
<feature type="transmembrane region" description="Helical" evidence="3">
    <location>
        <begin position="1143"/>
        <end position="1163"/>
    </location>
</feature>
<feature type="transmembrane region" description="Helical" evidence="3">
    <location>
        <begin position="1177"/>
        <end position="1197"/>
    </location>
</feature>
<feature type="domain" description="ABC transmembrane type-1 1" evidence="3">
    <location>
        <begin position="302"/>
        <end position="582"/>
    </location>
</feature>
<feature type="domain" description="ABC transporter 1" evidence="2">
    <location>
        <begin position="614"/>
        <end position="838"/>
    </location>
</feature>
<feature type="domain" description="ABC transmembrane type-1 2" evidence="3">
    <location>
        <begin position="921"/>
        <end position="1205"/>
    </location>
</feature>
<feature type="domain" description="ABC transporter 2" evidence="2">
    <location>
        <begin position="1242"/>
        <end position="1476"/>
    </location>
</feature>
<feature type="region of interest" description="Disordered" evidence="4">
    <location>
        <begin position="842"/>
        <end position="890"/>
    </location>
</feature>
<feature type="region of interest" description="Interaction with calmodulin and FKP42/TWD1" evidence="1">
    <location>
        <begin position="1236"/>
        <end position="1251"/>
    </location>
</feature>
<feature type="compositionally biased region" description="Acidic residues" evidence="4">
    <location>
        <begin position="845"/>
        <end position="856"/>
    </location>
</feature>
<feature type="compositionally biased region" description="Polar residues" evidence="4">
    <location>
        <begin position="857"/>
        <end position="870"/>
    </location>
</feature>
<feature type="compositionally biased region" description="Basic and acidic residues" evidence="4">
    <location>
        <begin position="875"/>
        <end position="885"/>
    </location>
</feature>
<feature type="binding site" evidence="2">
    <location>
        <begin position="649"/>
        <end position="656"/>
    </location>
    <ligand>
        <name>ATP</name>
        <dbReference type="ChEBI" id="CHEBI:30616"/>
        <label>1</label>
    </ligand>
</feature>
<feature type="binding site" evidence="2">
    <location>
        <begin position="1276"/>
        <end position="1283"/>
    </location>
    <ligand>
        <name>ATP</name>
        <dbReference type="ChEBI" id="CHEBI:30616"/>
        <label>2</label>
    </ligand>
</feature>
<feature type="sequence conflict" description="In Ref. 2; AAC04245/AAC04246." evidence="11" ref="2">
    <original>Q</original>
    <variation>T</variation>
    <location>
        <position position="21"/>
    </location>
</feature>
<feature type="sequence conflict" description="In Ref. 1; AAC49988." evidence="11" ref="1">
    <original>A</original>
    <variation>T</variation>
    <location>
        <position position="57"/>
    </location>
</feature>
<feature type="sequence conflict" description="In Ref. 1; AAC49988." evidence="11" ref="1">
    <original>W</original>
    <variation>C</variation>
    <location>
        <position position="141"/>
    </location>
</feature>
<feature type="sequence conflict" description="In Ref. 1; AAC49988." evidence="11" ref="1">
    <original>H</original>
    <variation>R</variation>
    <location>
        <position position="193"/>
    </location>
</feature>
<feature type="sequence conflict" description="In Ref. 2; AAC04245." evidence="11" ref="2">
    <original>A</original>
    <variation>P</variation>
    <location>
        <position position="231"/>
    </location>
</feature>
<feature type="sequence conflict" description="In Ref. 2; AAC04245/AAC04246." evidence="11" ref="2">
    <original>V</original>
    <variation>G</variation>
    <location>
        <position position="348"/>
    </location>
</feature>
<feature type="sequence conflict" description="In Ref. 1; AAC49988." evidence="11" ref="1">
    <original>F</original>
    <variation>S</variation>
    <location>
        <position position="380"/>
    </location>
</feature>
<feature type="sequence conflict" description="In Ref. 2; AAC04245." evidence="11" ref="2">
    <original>K</original>
    <variation>N</variation>
    <location>
        <position position="588"/>
    </location>
</feature>
<feature type="sequence conflict" description="In Ref. 2; AAC04246." evidence="11" ref="2">
    <original>L</original>
    <variation>V</variation>
    <location>
        <position position="835"/>
    </location>
</feature>
<feature type="sequence conflict" description="In Ref. 1; AAC49988." evidence="11" ref="1">
    <original>R</original>
    <variation>C</variation>
    <location>
        <position position="1250"/>
    </location>
</feature>
<feature type="sequence conflict" description="In Ref. 5; CAA81250." evidence="11" ref="5">
    <original>EV</original>
    <variation>GG</variation>
    <location>
        <begin position="1294"/>
        <end position="1295"/>
    </location>
</feature>
<feature type="sequence conflict" description="In Ref. 2; AAC04245." evidence="11" ref="2">
    <original>K</original>
    <variation>E</variation>
    <location>
        <position position="1297"/>
    </location>
</feature>
<feature type="sequence conflict" description="In Ref. 1; AAC49988." evidence="11" ref="1">
    <original>A</original>
    <variation>G</variation>
    <location>
        <position position="1392"/>
    </location>
</feature>
<gene>
    <name type="primary">ABCC2</name>
    <name type="synonym">EST4</name>
    <name type="synonym">MRP2</name>
    <name type="ordered locus">At2g34660</name>
    <name type="ORF">T29F13.13</name>
</gene>
<sequence>MGFEFIEWYCKPVPNGVWTKQVANAFGAYTPCATDSFVLGISQLVLLVLCLYRIWLALKDHKVERFCLRSRLYNYFLALLAAYATAEPLFRLIMGISVLDFDGPGLPPFEAFGLGVKAFAWGAVMVMILMETKIYIRELRWYVRFAVIYALVGDMVLLNLVLSVKEYYSSYVLYLYTSEVGAQVLFGILLFMHLPNLDTYPGYMPVRSETVDDYEYEEISDGQQICPEKHANIFDKIFFSWMNPLMTLGSKRPLTEKDVWYLDTWDQTETLFTSFQHSWDKELQKPQPWLLRALNNSLGGRFWWGGFWKIGNDCSQFVGPLLLNQLLKSMQEDAPAWMGYIYAFSIFVGVVFGVLCEAQYFQNVMRVGYRLRSALIAAVFRKSLRLTNEGRRKFQTGKITNLMTTDAESLQQICQSLHTMWSAPFRIIIALILLYQQLGVASLIGALLLVLMFPLQTVIISKMQKLTKEGLQRTDKRIGLMNEVLAAMDTVKCYAWENSFQSKVQTVRDDELSWFRKSQLLGALNMFILNSIPVLVTIVSFGVFTLLGGDLTPARAFTSLSLFAVLRFPLFMLPNIITQVVNANVSLKRLEEVLATEERILLPNPPIEPGEPAISIRNGYFSWDSKGDRPTLSNINLDVPLGSLVAVVGSTGEGKTSLISAILGELPATSDAIVTLRGSVAYVPQVSWIFNATVRDNILFGSPFDREKYERAIDVTSLKHDLELLPGGDLTEIGERGVNISGGQKQRVSMARAVYSNSDVYIFDDPLSALDAHVGQQVFEKCIKRELGQKTRVLVTNQLHFLSQVDRIVLVHEGTVKEEGTYEELSSNGPLFQRLMENAGKVEEYSEENGEAEADQTAEQPVANGNTNGLQMDGSDDKKSKEGNKKGGKSVLIKQEERETGVVSWRVLKRYQDALGGAWVVMMLLLCYVLTEVFRVTSSTWLSEWTDAGTPKSHGPLFYNLIYALLSFGQVLVTLTNSYWLIMSSLYAAKKLHDNMLHSILRAPMSFFHTNPLGRIINRFAKDLGDIDRTVAVFVNMFMGQVSQLLSTVVLIGIVSTLSLWAIMPLLVLFYGAYLYYQNTAREVKRMDSISRSPVYAQFGEALNGLSTIRAYKAYDRMADINGRSMDNNIRFTLVNMGANRWLGIRLETLGGLMIWLTASFAVMQNGRAENQQAFASTMGLLLSYALNITSLLTGVLRLASLAENSLNAVERVGNYIEIPPEAPPVIENNRPPPGWPSSGSIKFEDVVLRYRPQLPPVLHGVSFFIHPTDKVGIVGRTGAGKSSLLNALFRIVEVEKGRILIDDCDVGKFGLMDLRKVLGIIPQSPVLFSGTVRFNLDPFGEHNDADLWESLERAHLKDTIRRNPLGLDAEVSEAGENFSVGQRQLLSLSRALLRRSKILVLDEATAAVDVRTDALIQKTIREEFKSCTMLIIAHRLNTIIDCDKILVLDSGRVQEFSSPENLLSNEGSSFSKMVQSTGAANAEYLRSLVLDNKRAKDDSHHLQGQRKWLASSRWAAAAQFALAASLTSSHNDLQSLEIEDDSSILKRTNDAVVTLRSVLEGKHDKEIAESLEEHNISREGWLSSLYRMVEGLAVMSRLARNRMQQPDYNFEGNTFDWDNVEM</sequence>
<reference key="1">
    <citation type="journal article" date="1998" name="Biochim. Biophys. Acta">
        <title>Cloning of AtMRP1, an Arabidopsis thaliana cDNA encoding a homologue of the mammalian multidrug resistance-associated protein.</title>
        <authorList>
            <person name="Marin E."/>
            <person name="Leonhardt N."/>
            <person name="Vavasseur A."/>
            <person name="Forestier C."/>
        </authorList>
    </citation>
    <scope>NUCLEOTIDE SEQUENCE [MRNA]</scope>
    <source>
        <strain>cv. Landsberg erecta</strain>
    </source>
</reference>
<reference key="2">
    <citation type="journal article" date="1998" name="Plant Cell">
        <title>AtMRP2, an Arabidopsis ATP-binding cassette transporter able to transport glutathione S-conjugates and chlorophyll catabolites: functional comparisons with AtMRP1.</title>
        <authorList>
            <person name="Lu Y.-P."/>
            <person name="Li Z.-S."/>
            <person name="Drozdowicz Y.M."/>
            <person name="Hoertensteiner S."/>
            <person name="Martinoia E."/>
            <person name="Rea P.A."/>
        </authorList>
    </citation>
    <scope>NUCLEOTIDE SEQUENCE [GENOMIC DNA / MRNA]</scope>
    <scope>FUNCTION</scope>
    <scope>TISSUE SPECIFICITY</scope>
    <scope>BIOPHYSICOCHEMICAL PROPERTIES</scope>
</reference>
<reference key="3">
    <citation type="journal article" date="1999" name="Nature">
        <title>Sequence and analysis of chromosome 2 of the plant Arabidopsis thaliana.</title>
        <authorList>
            <person name="Lin X."/>
            <person name="Kaul S."/>
            <person name="Rounsley S.D."/>
            <person name="Shea T.P."/>
            <person name="Benito M.-I."/>
            <person name="Town C.D."/>
            <person name="Fujii C.Y."/>
            <person name="Mason T.M."/>
            <person name="Bowman C.L."/>
            <person name="Barnstead M.E."/>
            <person name="Feldblyum T.V."/>
            <person name="Buell C.R."/>
            <person name="Ketchum K.A."/>
            <person name="Lee J.J."/>
            <person name="Ronning C.M."/>
            <person name="Koo H.L."/>
            <person name="Moffat K.S."/>
            <person name="Cronin L.A."/>
            <person name="Shen M."/>
            <person name="Pai G."/>
            <person name="Van Aken S."/>
            <person name="Umayam L."/>
            <person name="Tallon L.J."/>
            <person name="Gill J.E."/>
            <person name="Adams M.D."/>
            <person name="Carrera A.J."/>
            <person name="Creasy T.H."/>
            <person name="Goodman H.M."/>
            <person name="Somerville C.R."/>
            <person name="Copenhaver G.P."/>
            <person name="Preuss D."/>
            <person name="Nierman W.C."/>
            <person name="White O."/>
            <person name="Eisen J.A."/>
            <person name="Salzberg S.L."/>
            <person name="Fraser C.M."/>
            <person name="Venter J.C."/>
        </authorList>
    </citation>
    <scope>NUCLEOTIDE SEQUENCE [LARGE SCALE GENOMIC DNA]</scope>
    <source>
        <strain>cv. Columbia</strain>
    </source>
</reference>
<reference key="4">
    <citation type="journal article" date="2017" name="Plant J.">
        <title>Araport11: a complete reannotation of the Arabidopsis thaliana reference genome.</title>
        <authorList>
            <person name="Cheng C.Y."/>
            <person name="Krishnakumar V."/>
            <person name="Chan A.P."/>
            <person name="Thibaud-Nissen F."/>
            <person name="Schobel S."/>
            <person name="Town C.D."/>
        </authorList>
    </citation>
    <scope>GENOME REANNOTATION</scope>
    <source>
        <strain>cv. Columbia</strain>
    </source>
</reference>
<reference key="5">
    <citation type="submission" date="1993-09" db="EMBL/GenBank/DDBJ databases">
        <authorList>
            <person name="Desprez T."/>
            <person name="Amselem J."/>
            <person name="Chiapello H."/>
            <person name="Caboche M."/>
            <person name="Hofte H."/>
        </authorList>
    </citation>
    <scope>NUCLEOTIDE SEQUENCE [MRNA] OF 1174-1295</scope>
    <source>
        <strain>cv. Columbia</strain>
        <tissue>Seedling</tissue>
    </source>
</reference>
<reference key="6">
    <citation type="journal article" date="1997" name="FEBS Lett.">
        <title>Differential expression of genes coding for ABC transporters after treatment of Arabidopsis thaliana with xenobiotics.</title>
        <authorList>
            <person name="Tommasini R."/>
            <person name="Vogt E."/>
            <person name="Schmid J."/>
            <person name="Fromentau M."/>
            <person name="Amrhein N."/>
            <person name="Martinoia E."/>
        </authorList>
    </citation>
    <scope>NUCLEOTIDE SEQUENCE [MRNA] OF 1182-1491</scope>
    <scope>INDUCTION</scope>
</reference>
<reference key="7">
    <citation type="journal article" date="2001" name="J. Biol. Chem.">
        <title>Enhanced multispecificity of Arabidopsis vacuolar multidrug resistance-associated protein-type ATP-binding cassette transporter, AtMRP2.</title>
        <authorList>
            <person name="Liu G."/>
            <person name="Sanchez-Fernandez R."/>
            <person name="Li Z.-S."/>
            <person name="Rea P.A."/>
        </authorList>
    </citation>
    <scope>FUNCTION</scope>
    <scope>SUBCELLULAR LOCATION</scope>
    <scope>ACTIVITY REGULATION</scope>
    <scope>BIOPHYSICOCHEMICAL PROPERTIES</scope>
</reference>
<reference key="8">
    <citation type="journal article" date="2001" name="J. Biol. Chem.">
        <title>The Arabidopsis thaliana ABC protein superfamily, a complete inventory.</title>
        <authorList>
            <person name="Sanchez-Fernandez R."/>
            <person name="Davies T.G."/>
            <person name="Coleman J.O."/>
            <person name="Rea P.A."/>
        </authorList>
    </citation>
    <scope>GENE FAMILY</scope>
    <scope>NOMENCLATURE</scope>
</reference>
<reference key="9">
    <citation type="journal article" date="2002" name="Planta">
        <title>Multifunctionality of plant ABC transporters -- more than just detoxifiers.</title>
        <authorList>
            <person name="Martinoia E."/>
            <person name="Klein M."/>
            <person name="Geisler M."/>
            <person name="Bovet L."/>
            <person name="Forestier C."/>
            <person name="Kolukisaoglu H.U."/>
            <person name="Mueller-Roeber B."/>
            <person name="Schulz B."/>
        </authorList>
    </citation>
    <scope>GENE FAMILY</scope>
</reference>
<reference key="10">
    <citation type="journal article" date="2002" name="Planta">
        <title>Family business: the multidrug-resistance related protein (MRP) ABC transporter genes in Arabidopsis thaliana.</title>
        <authorList>
            <person name="Kolukisaoglu U.H."/>
            <person name="Bovet L."/>
            <person name="Klein M."/>
            <person name="Eggmann T."/>
            <person name="Geisler M."/>
            <person name="Wanke D."/>
            <person name="Martinoia E."/>
            <person name="Schulz B."/>
        </authorList>
    </citation>
    <scope>TISSUE SPECIFICITY</scope>
</reference>
<reference key="11">
    <citation type="journal article" date="2004" name="Mol. Biol. Cell">
        <title>Arabidopsis immunophilin-like TWD1 functionally interacts with vacuolar ABC transporters.</title>
        <authorList>
            <person name="Geisler M."/>
            <person name="Girin M."/>
            <person name="Brandt S."/>
            <person name="Vincenzetti V."/>
            <person name="Plaza S."/>
            <person name="Paris N."/>
            <person name="Kobae Y."/>
            <person name="Maeshima M."/>
            <person name="Billion K."/>
            <person name="Kolukisaoglu U.H."/>
            <person name="Schulz B."/>
            <person name="Martinoia E."/>
        </authorList>
    </citation>
    <scope>INTERACTION WITH FKBP42/TWD1</scope>
</reference>
<reference key="12">
    <citation type="journal article" date="2007" name="Mol. Cell. Proteomics">
        <title>A proteomics dissection of Arabidopsis thaliana vacuoles isolated from cell culture.</title>
        <authorList>
            <person name="Jaquinod M."/>
            <person name="Villiers F."/>
            <person name="Kieffer-Jaquinod S."/>
            <person name="Hugouvieux V."/>
            <person name="Bruley C."/>
            <person name="Garin J."/>
            <person name="Bourguignon J."/>
        </authorList>
    </citation>
    <scope>IDENTIFICATION BY MASS SPECTROMETRY</scope>
    <scope>SUBCELLULAR LOCATION [LARGE SCALE ANALYSIS]</scope>
</reference>
<reference key="13">
    <citation type="journal article" date="2008" name="Trends Plant Sci.">
        <title>Plant ABC proteins - a unified nomenclature and updated inventory.</title>
        <authorList>
            <person name="Verrier P.J."/>
            <person name="Bird D."/>
            <person name="Burla B."/>
            <person name="Dassa E."/>
            <person name="Forestier C."/>
            <person name="Geisler M."/>
            <person name="Klein M."/>
            <person name="Kolukisaoglu H.U."/>
            <person name="Lee Y."/>
            <person name="Martinoia E."/>
            <person name="Murphy A."/>
            <person name="Rea P.A."/>
            <person name="Samuels L."/>
            <person name="Schulz B."/>
            <person name="Spalding E.J."/>
            <person name="Yazaki K."/>
            <person name="Theodoulou F.L."/>
        </authorList>
    </citation>
    <scope>GENE FAMILY</scope>
    <scope>NOMENCLATURE</scope>
</reference>